<organism>
    <name type="scientific">Haemophilus influenzae (strain ATCC 51907 / DSM 11121 / KW20 / Rd)</name>
    <dbReference type="NCBI Taxonomy" id="71421"/>
    <lineage>
        <taxon>Bacteria</taxon>
        <taxon>Pseudomonadati</taxon>
        <taxon>Pseudomonadota</taxon>
        <taxon>Gammaproteobacteria</taxon>
        <taxon>Pasteurellales</taxon>
        <taxon>Pasteurellaceae</taxon>
        <taxon>Haemophilus</taxon>
    </lineage>
</organism>
<sequence length="457" mass="51217">MALWGGRFTQAADKRFKDFNDSLRFDYRLAEQDIQGSIGWSKALVKVNVLTIEEQHQLEQALNELLVEVRSNPQAILQDDAEDIHSWVESKLIDKVGNLGKKLHTGRSRNDQVAVDIKLWCKQRVIELQESVRNLQRHLVQTAENTQQAVMPGYTHLQRAQPITFAHWCMAYVEMFDRDYSRLTDAYNRMNTCPLGSGALAGTAYAVDRDSLAHDLSFAFATRNSLDSVSDRDHIVELLSIASLSMAHLSRFAEDMIIFNSGEANFVELSDRVTSGSSLMPQKKNPDACELIRGKTGRVIGSLTSMLITLKGLPLAYNKDMQEDKEGIFDALDTWQNCVDMATFVLDELKVNVERTREAALKGYSNATELADYLVSKGVPFRDSHHIVGETVVYAIEKGKGLEDLTIPEFRQFSEVVGDDVYEILSLQSCLDKRCAKGGVSPLRVAEAIAEAKTRFA</sequence>
<dbReference type="EC" id="4.3.2.1" evidence="1"/>
<dbReference type="EMBL" id="L42023">
    <property type="protein sequence ID" value="AAC22470.1"/>
    <property type="molecule type" value="Genomic_DNA"/>
</dbReference>
<dbReference type="PIR" id="F64095">
    <property type="entry name" value="F64095"/>
</dbReference>
<dbReference type="RefSeq" id="NP_438971.1">
    <property type="nucleotide sequence ID" value="NC_000907.1"/>
</dbReference>
<dbReference type="SMR" id="P44314"/>
<dbReference type="STRING" id="71421.HI_0811"/>
<dbReference type="EnsemblBacteria" id="AAC22470">
    <property type="protein sequence ID" value="AAC22470"/>
    <property type="gene ID" value="HI_0811"/>
</dbReference>
<dbReference type="KEGG" id="hin:HI_0811"/>
<dbReference type="PATRIC" id="fig|71421.8.peg.852"/>
<dbReference type="eggNOG" id="COG0165">
    <property type="taxonomic scope" value="Bacteria"/>
</dbReference>
<dbReference type="HOGENOM" id="CLU_027272_2_3_6"/>
<dbReference type="OrthoDB" id="9769623at2"/>
<dbReference type="PhylomeDB" id="P44314"/>
<dbReference type="BioCyc" id="HINF71421:G1GJ1-852-MONOMER"/>
<dbReference type="UniPathway" id="UPA00068">
    <property type="reaction ID" value="UER00114"/>
</dbReference>
<dbReference type="Proteomes" id="UP000000579">
    <property type="component" value="Chromosome"/>
</dbReference>
<dbReference type="GO" id="GO:0005829">
    <property type="term" value="C:cytosol"/>
    <property type="evidence" value="ECO:0000318"/>
    <property type="project" value="GO_Central"/>
</dbReference>
<dbReference type="GO" id="GO:0004056">
    <property type="term" value="F:argininosuccinate lyase activity"/>
    <property type="evidence" value="ECO:0000318"/>
    <property type="project" value="GO_Central"/>
</dbReference>
<dbReference type="GO" id="GO:0042450">
    <property type="term" value="P:arginine biosynthetic process via ornithine"/>
    <property type="evidence" value="ECO:0000318"/>
    <property type="project" value="GO_Central"/>
</dbReference>
<dbReference type="GO" id="GO:0006526">
    <property type="term" value="P:L-arginine biosynthetic process"/>
    <property type="evidence" value="ECO:0007669"/>
    <property type="project" value="UniProtKB-UniRule"/>
</dbReference>
<dbReference type="CDD" id="cd01359">
    <property type="entry name" value="Argininosuccinate_lyase"/>
    <property type="match status" value="1"/>
</dbReference>
<dbReference type="FunFam" id="1.10.40.30:FF:000001">
    <property type="entry name" value="Argininosuccinate lyase"/>
    <property type="match status" value="1"/>
</dbReference>
<dbReference type="FunFam" id="1.20.200.10:FF:000006">
    <property type="entry name" value="Argininosuccinate lyase"/>
    <property type="match status" value="1"/>
</dbReference>
<dbReference type="Gene3D" id="1.10.40.30">
    <property type="entry name" value="Fumarase/aspartase (C-terminal domain)"/>
    <property type="match status" value="1"/>
</dbReference>
<dbReference type="Gene3D" id="1.20.200.10">
    <property type="entry name" value="Fumarase/aspartase (Central domain)"/>
    <property type="match status" value="1"/>
</dbReference>
<dbReference type="Gene3D" id="1.10.275.10">
    <property type="entry name" value="Fumarase/aspartase (N-terminal domain)"/>
    <property type="match status" value="1"/>
</dbReference>
<dbReference type="HAMAP" id="MF_00006">
    <property type="entry name" value="Arg_succ_lyase"/>
    <property type="match status" value="1"/>
</dbReference>
<dbReference type="InterPro" id="IPR029419">
    <property type="entry name" value="Arg_succ_lyase_C"/>
</dbReference>
<dbReference type="InterPro" id="IPR009049">
    <property type="entry name" value="Argininosuccinate_lyase"/>
</dbReference>
<dbReference type="InterPro" id="IPR024083">
    <property type="entry name" value="Fumarase/histidase_N"/>
</dbReference>
<dbReference type="InterPro" id="IPR020557">
    <property type="entry name" value="Fumarate_lyase_CS"/>
</dbReference>
<dbReference type="InterPro" id="IPR000362">
    <property type="entry name" value="Fumarate_lyase_fam"/>
</dbReference>
<dbReference type="InterPro" id="IPR022761">
    <property type="entry name" value="Fumarate_lyase_N"/>
</dbReference>
<dbReference type="InterPro" id="IPR008948">
    <property type="entry name" value="L-Aspartase-like"/>
</dbReference>
<dbReference type="NCBIfam" id="TIGR00838">
    <property type="entry name" value="argH"/>
    <property type="match status" value="1"/>
</dbReference>
<dbReference type="NCBIfam" id="NF008964">
    <property type="entry name" value="PRK12308.1"/>
    <property type="match status" value="1"/>
</dbReference>
<dbReference type="PANTHER" id="PTHR43814">
    <property type="entry name" value="ARGININOSUCCINATE LYASE"/>
    <property type="match status" value="1"/>
</dbReference>
<dbReference type="PANTHER" id="PTHR43814:SF1">
    <property type="entry name" value="ARGININOSUCCINATE LYASE"/>
    <property type="match status" value="1"/>
</dbReference>
<dbReference type="Pfam" id="PF14698">
    <property type="entry name" value="ASL_C2"/>
    <property type="match status" value="1"/>
</dbReference>
<dbReference type="Pfam" id="PF00206">
    <property type="entry name" value="Lyase_1"/>
    <property type="match status" value="1"/>
</dbReference>
<dbReference type="PRINTS" id="PR00145">
    <property type="entry name" value="ARGSUCLYASE"/>
</dbReference>
<dbReference type="PRINTS" id="PR00149">
    <property type="entry name" value="FUMRATELYASE"/>
</dbReference>
<dbReference type="SUPFAM" id="SSF48557">
    <property type="entry name" value="L-aspartase-like"/>
    <property type="match status" value="1"/>
</dbReference>
<dbReference type="PROSITE" id="PS00163">
    <property type="entry name" value="FUMARATE_LYASES"/>
    <property type="match status" value="1"/>
</dbReference>
<evidence type="ECO:0000255" key="1">
    <source>
        <dbReference type="HAMAP-Rule" id="MF_00006"/>
    </source>
</evidence>
<keyword id="KW-0028">Amino-acid biosynthesis</keyword>
<keyword id="KW-0055">Arginine biosynthesis</keyword>
<keyword id="KW-0963">Cytoplasm</keyword>
<keyword id="KW-0456">Lyase</keyword>
<keyword id="KW-1185">Reference proteome</keyword>
<proteinExistence type="inferred from homology"/>
<feature type="chain" id="PRO_0000137776" description="Argininosuccinate lyase">
    <location>
        <begin position="1"/>
        <end position="457"/>
    </location>
</feature>
<gene>
    <name evidence="1" type="primary">argH</name>
    <name type="ordered locus">HI_0811</name>
</gene>
<name>ARLY_HAEIN</name>
<accession>P44314</accession>
<protein>
    <recommendedName>
        <fullName evidence="1">Argininosuccinate lyase</fullName>
        <shortName evidence="1">ASAL</shortName>
        <ecNumber evidence="1">4.3.2.1</ecNumber>
    </recommendedName>
    <alternativeName>
        <fullName evidence="1">Arginosuccinase</fullName>
    </alternativeName>
</protein>
<comment type="catalytic activity">
    <reaction evidence="1">
        <text>2-(N(omega)-L-arginino)succinate = fumarate + L-arginine</text>
        <dbReference type="Rhea" id="RHEA:24020"/>
        <dbReference type="ChEBI" id="CHEBI:29806"/>
        <dbReference type="ChEBI" id="CHEBI:32682"/>
        <dbReference type="ChEBI" id="CHEBI:57472"/>
        <dbReference type="EC" id="4.3.2.1"/>
    </reaction>
</comment>
<comment type="pathway">
    <text evidence="1">Amino-acid biosynthesis; L-arginine biosynthesis; L-arginine from L-ornithine and carbamoyl phosphate: step 3/3.</text>
</comment>
<comment type="subcellular location">
    <subcellularLocation>
        <location evidence="1">Cytoplasm</location>
    </subcellularLocation>
</comment>
<comment type="similarity">
    <text evidence="1">Belongs to the lyase 1 family. Argininosuccinate lyase subfamily.</text>
</comment>
<reference key="1">
    <citation type="journal article" date="1995" name="Science">
        <title>Whole-genome random sequencing and assembly of Haemophilus influenzae Rd.</title>
        <authorList>
            <person name="Fleischmann R.D."/>
            <person name="Adams M.D."/>
            <person name="White O."/>
            <person name="Clayton R.A."/>
            <person name="Kirkness E.F."/>
            <person name="Kerlavage A.R."/>
            <person name="Bult C.J."/>
            <person name="Tomb J.-F."/>
            <person name="Dougherty B.A."/>
            <person name="Merrick J.M."/>
            <person name="McKenney K."/>
            <person name="Sutton G.G."/>
            <person name="FitzHugh W."/>
            <person name="Fields C.A."/>
            <person name="Gocayne J.D."/>
            <person name="Scott J.D."/>
            <person name="Shirley R."/>
            <person name="Liu L.-I."/>
            <person name="Glodek A."/>
            <person name="Kelley J.M."/>
            <person name="Weidman J.F."/>
            <person name="Phillips C.A."/>
            <person name="Spriggs T."/>
            <person name="Hedblom E."/>
            <person name="Cotton M.D."/>
            <person name="Utterback T.R."/>
            <person name="Hanna M.C."/>
            <person name="Nguyen D.T."/>
            <person name="Saudek D.M."/>
            <person name="Brandon R.C."/>
            <person name="Fine L.D."/>
            <person name="Fritchman J.L."/>
            <person name="Fuhrmann J.L."/>
            <person name="Geoghagen N.S.M."/>
            <person name="Gnehm C.L."/>
            <person name="McDonald L.A."/>
            <person name="Small K.V."/>
            <person name="Fraser C.M."/>
            <person name="Smith H.O."/>
            <person name="Venter J.C."/>
        </authorList>
    </citation>
    <scope>NUCLEOTIDE SEQUENCE [LARGE SCALE GENOMIC DNA]</scope>
    <source>
        <strain>ATCC 51907 / DSM 11121 / KW20 / Rd</strain>
    </source>
</reference>